<comment type="function">
    <text evidence="1">Catalyzes the transfer of an acyl group from acyl-phosphate (acyl-PO(4)) to glycerol-3-phosphate (G3P) to form lysophosphatidic acid (LPA). This enzyme utilizes acyl-phosphate as fatty acyl donor, but not acyl-CoA or acyl-ACP.</text>
</comment>
<comment type="catalytic activity">
    <reaction evidence="1">
        <text>an acyl phosphate + sn-glycerol 3-phosphate = a 1-acyl-sn-glycero-3-phosphate + phosphate</text>
        <dbReference type="Rhea" id="RHEA:34075"/>
        <dbReference type="ChEBI" id="CHEBI:43474"/>
        <dbReference type="ChEBI" id="CHEBI:57597"/>
        <dbReference type="ChEBI" id="CHEBI:57970"/>
        <dbReference type="ChEBI" id="CHEBI:59918"/>
        <dbReference type="EC" id="2.3.1.275"/>
    </reaction>
</comment>
<comment type="pathway">
    <text evidence="1">Lipid metabolism; phospholipid metabolism.</text>
</comment>
<comment type="subunit">
    <text evidence="1">Probably interacts with PlsX.</text>
</comment>
<comment type="subcellular location">
    <subcellularLocation>
        <location evidence="1">Cell membrane</location>
        <topology evidence="1">Multi-pass membrane protein</topology>
    </subcellularLocation>
</comment>
<comment type="similarity">
    <text evidence="1">Belongs to the PlsY family.</text>
</comment>
<accession>C0M7J7</accession>
<reference key="1">
    <citation type="journal article" date="2009" name="PLoS Pathog.">
        <title>Genomic evidence for the evolution of Streptococcus equi: host restriction, increased virulence, and genetic exchange with human pathogens.</title>
        <authorList>
            <person name="Holden M.T.G."/>
            <person name="Heather Z."/>
            <person name="Paillot R."/>
            <person name="Steward K.F."/>
            <person name="Webb K."/>
            <person name="Ainslie F."/>
            <person name="Jourdan T."/>
            <person name="Bason N.C."/>
            <person name="Holroyd N.E."/>
            <person name="Mungall K."/>
            <person name="Quail M.A."/>
            <person name="Sanders M."/>
            <person name="Simmonds M."/>
            <person name="Willey D."/>
            <person name="Brooks K."/>
            <person name="Aanensen D.M."/>
            <person name="Spratt B.G."/>
            <person name="Jolley K.A."/>
            <person name="Maiden M.C.J."/>
            <person name="Kehoe M."/>
            <person name="Chanter N."/>
            <person name="Bentley S.D."/>
            <person name="Robinson C."/>
            <person name="Maskell D.J."/>
            <person name="Parkhill J."/>
            <person name="Waller A.S."/>
        </authorList>
    </citation>
    <scope>NUCLEOTIDE SEQUENCE [LARGE SCALE GENOMIC DNA]</scope>
    <source>
        <strain>4047</strain>
    </source>
</reference>
<name>PLSY_STRE4</name>
<sequence length="215" mass="23136">MKLILLILTAYLLGSIPTGLWIGQYFYNINLREHGSGNTGTTNTFRILGLKAGAATLLIDIFKGTLATLLPVLVGASNISPITIGFFAVLGHTFPIFAGFKGGKAVATSAGVLLGFAPLYLLFLAAVFVLTLYLFSMISLASLTASVVAVISVLTFPAAHFLLPSYDWLLTITIVVLAAIIILRHQDNMKRIKQQSENLIPWGLNLSKQQPASHH</sequence>
<gene>
    <name evidence="1" type="primary">plsY</name>
    <name type="ordered locus">SEQ_1341</name>
</gene>
<protein>
    <recommendedName>
        <fullName evidence="1">Glycerol-3-phosphate acyltransferase</fullName>
    </recommendedName>
    <alternativeName>
        <fullName evidence="1">Acyl-PO4 G3P acyltransferase</fullName>
    </alternativeName>
    <alternativeName>
        <fullName evidence="1">Acyl-phosphate--glycerol-3-phosphate acyltransferase</fullName>
    </alternativeName>
    <alternativeName>
        <fullName evidence="1">G3P acyltransferase</fullName>
        <shortName evidence="1">GPAT</shortName>
        <ecNumber evidence="1">2.3.1.275</ecNumber>
    </alternativeName>
    <alternativeName>
        <fullName evidence="1">Lysophosphatidic acid synthase</fullName>
        <shortName evidence="1">LPA synthase</shortName>
    </alternativeName>
</protein>
<dbReference type="EC" id="2.3.1.275" evidence="1"/>
<dbReference type="EMBL" id="FM204883">
    <property type="protein sequence ID" value="CAW94143.1"/>
    <property type="molecule type" value="Genomic_DNA"/>
</dbReference>
<dbReference type="RefSeq" id="WP_012679681.1">
    <property type="nucleotide sequence ID" value="NC_012471.1"/>
</dbReference>
<dbReference type="SMR" id="C0M7J7"/>
<dbReference type="KEGG" id="seu:SEQ_1341"/>
<dbReference type="HOGENOM" id="CLU_081254_4_0_9"/>
<dbReference type="OrthoDB" id="9777124at2"/>
<dbReference type="UniPathway" id="UPA00085"/>
<dbReference type="Proteomes" id="UP000001365">
    <property type="component" value="Chromosome"/>
</dbReference>
<dbReference type="GO" id="GO:0005886">
    <property type="term" value="C:plasma membrane"/>
    <property type="evidence" value="ECO:0007669"/>
    <property type="project" value="UniProtKB-SubCell"/>
</dbReference>
<dbReference type="GO" id="GO:0043772">
    <property type="term" value="F:acyl-phosphate glycerol-3-phosphate acyltransferase activity"/>
    <property type="evidence" value="ECO:0007669"/>
    <property type="project" value="UniProtKB-UniRule"/>
</dbReference>
<dbReference type="GO" id="GO:0008654">
    <property type="term" value="P:phospholipid biosynthetic process"/>
    <property type="evidence" value="ECO:0007669"/>
    <property type="project" value="UniProtKB-UniRule"/>
</dbReference>
<dbReference type="HAMAP" id="MF_01043">
    <property type="entry name" value="PlsY"/>
    <property type="match status" value="1"/>
</dbReference>
<dbReference type="InterPro" id="IPR003811">
    <property type="entry name" value="G3P_acylTferase_PlsY"/>
</dbReference>
<dbReference type="NCBIfam" id="TIGR00023">
    <property type="entry name" value="glycerol-3-phosphate 1-O-acyltransferase PlsY"/>
    <property type="match status" value="1"/>
</dbReference>
<dbReference type="PANTHER" id="PTHR30309:SF0">
    <property type="entry name" value="GLYCEROL-3-PHOSPHATE ACYLTRANSFERASE-RELATED"/>
    <property type="match status" value="1"/>
</dbReference>
<dbReference type="PANTHER" id="PTHR30309">
    <property type="entry name" value="INNER MEMBRANE PROTEIN YGIH"/>
    <property type="match status" value="1"/>
</dbReference>
<dbReference type="Pfam" id="PF02660">
    <property type="entry name" value="G3P_acyltransf"/>
    <property type="match status" value="1"/>
</dbReference>
<dbReference type="SMART" id="SM01207">
    <property type="entry name" value="G3P_acyltransf"/>
    <property type="match status" value="1"/>
</dbReference>
<keyword id="KW-1003">Cell membrane</keyword>
<keyword id="KW-0444">Lipid biosynthesis</keyword>
<keyword id="KW-0443">Lipid metabolism</keyword>
<keyword id="KW-0472">Membrane</keyword>
<keyword id="KW-0594">Phospholipid biosynthesis</keyword>
<keyword id="KW-1208">Phospholipid metabolism</keyword>
<keyword id="KW-0808">Transferase</keyword>
<keyword id="KW-0812">Transmembrane</keyword>
<keyword id="KW-1133">Transmembrane helix</keyword>
<organism>
    <name type="scientific">Streptococcus equi subsp. equi (strain 4047)</name>
    <dbReference type="NCBI Taxonomy" id="553482"/>
    <lineage>
        <taxon>Bacteria</taxon>
        <taxon>Bacillati</taxon>
        <taxon>Bacillota</taxon>
        <taxon>Bacilli</taxon>
        <taxon>Lactobacillales</taxon>
        <taxon>Streptococcaceae</taxon>
        <taxon>Streptococcus</taxon>
    </lineage>
</organism>
<feature type="chain" id="PRO_1000149583" description="Glycerol-3-phosphate acyltransferase">
    <location>
        <begin position="1"/>
        <end position="215"/>
    </location>
</feature>
<feature type="transmembrane region" description="Helical" evidence="1">
    <location>
        <begin position="3"/>
        <end position="23"/>
    </location>
</feature>
<feature type="transmembrane region" description="Helical" evidence="1">
    <location>
        <begin position="42"/>
        <end position="61"/>
    </location>
</feature>
<feature type="transmembrane region" description="Helical" evidence="1">
    <location>
        <begin position="68"/>
        <end position="90"/>
    </location>
</feature>
<feature type="transmembrane region" description="Helical" evidence="1">
    <location>
        <begin position="110"/>
        <end position="130"/>
    </location>
</feature>
<feature type="transmembrane region" description="Helical" evidence="1">
    <location>
        <begin position="134"/>
        <end position="154"/>
    </location>
</feature>
<feature type="transmembrane region" description="Helical" evidence="1">
    <location>
        <begin position="162"/>
        <end position="182"/>
    </location>
</feature>
<evidence type="ECO:0000255" key="1">
    <source>
        <dbReference type="HAMAP-Rule" id="MF_01043"/>
    </source>
</evidence>
<proteinExistence type="inferred from homology"/>